<dbReference type="EC" id="5.3.1.6" evidence="1"/>
<dbReference type="EMBL" id="BX640418">
    <property type="protein sequence ID" value="CAE42612.1"/>
    <property type="molecule type" value="Genomic_DNA"/>
</dbReference>
<dbReference type="RefSeq" id="NP_880977.1">
    <property type="nucleotide sequence ID" value="NC_002929.2"/>
</dbReference>
<dbReference type="RefSeq" id="WP_010930882.1">
    <property type="nucleotide sequence ID" value="NZ_CP039022.1"/>
</dbReference>
<dbReference type="SMR" id="Q7VWC1"/>
<dbReference type="STRING" id="257313.BP2339"/>
<dbReference type="PaxDb" id="257313-BP2339"/>
<dbReference type="GeneID" id="69602241"/>
<dbReference type="KEGG" id="bpe:BP2339"/>
<dbReference type="PATRIC" id="fig|257313.5.peg.2521"/>
<dbReference type="eggNOG" id="COG0120">
    <property type="taxonomic scope" value="Bacteria"/>
</dbReference>
<dbReference type="HOGENOM" id="CLU_056590_1_1_4"/>
<dbReference type="UniPathway" id="UPA00115">
    <property type="reaction ID" value="UER00412"/>
</dbReference>
<dbReference type="Proteomes" id="UP000002676">
    <property type="component" value="Chromosome"/>
</dbReference>
<dbReference type="GO" id="GO:0005829">
    <property type="term" value="C:cytosol"/>
    <property type="evidence" value="ECO:0007669"/>
    <property type="project" value="TreeGrafter"/>
</dbReference>
<dbReference type="GO" id="GO:0004751">
    <property type="term" value="F:ribose-5-phosphate isomerase activity"/>
    <property type="evidence" value="ECO:0007669"/>
    <property type="project" value="UniProtKB-UniRule"/>
</dbReference>
<dbReference type="GO" id="GO:0006014">
    <property type="term" value="P:D-ribose metabolic process"/>
    <property type="evidence" value="ECO:0007669"/>
    <property type="project" value="TreeGrafter"/>
</dbReference>
<dbReference type="GO" id="GO:0009052">
    <property type="term" value="P:pentose-phosphate shunt, non-oxidative branch"/>
    <property type="evidence" value="ECO:0007669"/>
    <property type="project" value="UniProtKB-UniRule"/>
</dbReference>
<dbReference type="CDD" id="cd01398">
    <property type="entry name" value="RPI_A"/>
    <property type="match status" value="1"/>
</dbReference>
<dbReference type="FunFam" id="3.40.50.1360:FF:000001">
    <property type="entry name" value="Ribose-5-phosphate isomerase A"/>
    <property type="match status" value="1"/>
</dbReference>
<dbReference type="Gene3D" id="3.30.70.260">
    <property type="match status" value="1"/>
</dbReference>
<dbReference type="Gene3D" id="3.40.50.1360">
    <property type="match status" value="1"/>
</dbReference>
<dbReference type="HAMAP" id="MF_00170">
    <property type="entry name" value="Rib_5P_isom_A"/>
    <property type="match status" value="1"/>
</dbReference>
<dbReference type="InterPro" id="IPR037171">
    <property type="entry name" value="NagB/RpiA_transferase-like"/>
</dbReference>
<dbReference type="InterPro" id="IPR020672">
    <property type="entry name" value="Ribose5P_isomerase_typA_subgr"/>
</dbReference>
<dbReference type="InterPro" id="IPR004788">
    <property type="entry name" value="Ribose5P_isomerase_type_A"/>
</dbReference>
<dbReference type="NCBIfam" id="NF001924">
    <property type="entry name" value="PRK00702.1"/>
    <property type="match status" value="1"/>
</dbReference>
<dbReference type="NCBIfam" id="TIGR00021">
    <property type="entry name" value="rpiA"/>
    <property type="match status" value="1"/>
</dbReference>
<dbReference type="PANTHER" id="PTHR11934">
    <property type="entry name" value="RIBOSE-5-PHOSPHATE ISOMERASE"/>
    <property type="match status" value="1"/>
</dbReference>
<dbReference type="PANTHER" id="PTHR11934:SF0">
    <property type="entry name" value="RIBOSE-5-PHOSPHATE ISOMERASE"/>
    <property type="match status" value="1"/>
</dbReference>
<dbReference type="Pfam" id="PF06026">
    <property type="entry name" value="Rib_5-P_isom_A"/>
    <property type="match status" value="1"/>
</dbReference>
<dbReference type="SUPFAM" id="SSF75445">
    <property type="entry name" value="D-ribose-5-phosphate isomerase (RpiA), lid domain"/>
    <property type="match status" value="1"/>
</dbReference>
<dbReference type="SUPFAM" id="SSF100950">
    <property type="entry name" value="NagB/RpiA/CoA transferase-like"/>
    <property type="match status" value="1"/>
</dbReference>
<name>RPIA_BORPE</name>
<organism>
    <name type="scientific">Bordetella pertussis (strain Tohama I / ATCC BAA-589 / NCTC 13251)</name>
    <dbReference type="NCBI Taxonomy" id="257313"/>
    <lineage>
        <taxon>Bacteria</taxon>
        <taxon>Pseudomonadati</taxon>
        <taxon>Pseudomonadota</taxon>
        <taxon>Betaproteobacteria</taxon>
        <taxon>Burkholderiales</taxon>
        <taxon>Alcaligenaceae</taxon>
        <taxon>Bordetella</taxon>
    </lineage>
</organism>
<evidence type="ECO:0000255" key="1">
    <source>
        <dbReference type="HAMAP-Rule" id="MF_00170"/>
    </source>
</evidence>
<protein>
    <recommendedName>
        <fullName evidence="1">Ribose-5-phosphate isomerase A</fullName>
        <ecNumber evidence="1">5.3.1.6</ecNumber>
    </recommendedName>
    <alternativeName>
        <fullName evidence="1">Phosphoriboisomerase A</fullName>
        <shortName evidence="1">PRI</shortName>
    </alternativeName>
</protein>
<sequence>MLTQQELKQQAADAALELVEQVAGPDVIIGVGTGSTADLFIDGLACFKGRLRGTVASSERSAARLAGHGLAVLDLNDVQSMPIYVDGADEIDPNLHMIKGGGGALTREKIVASVARRYICIADESKLVERLGRFPLPVEVIPMARNAVARGLSRLGGQPALREGFVTDNGNIILDVAGLSIADAPGLEKTINDIPGVVTCGLFALAGADVALLATQDGIRRLERRG</sequence>
<keyword id="KW-0413">Isomerase</keyword>
<keyword id="KW-1185">Reference proteome</keyword>
<comment type="function">
    <text evidence="1">Catalyzes the reversible conversion of ribose-5-phosphate to ribulose 5-phosphate.</text>
</comment>
<comment type="catalytic activity">
    <reaction evidence="1">
        <text>aldehydo-D-ribose 5-phosphate = D-ribulose 5-phosphate</text>
        <dbReference type="Rhea" id="RHEA:14657"/>
        <dbReference type="ChEBI" id="CHEBI:58121"/>
        <dbReference type="ChEBI" id="CHEBI:58273"/>
        <dbReference type="EC" id="5.3.1.6"/>
    </reaction>
</comment>
<comment type="pathway">
    <text evidence="1">Carbohydrate degradation; pentose phosphate pathway; D-ribose 5-phosphate from D-ribulose 5-phosphate (non-oxidative stage): step 1/1.</text>
</comment>
<comment type="subunit">
    <text evidence="1">Homodimer.</text>
</comment>
<comment type="similarity">
    <text evidence="1">Belongs to the ribose 5-phosphate isomerase family.</text>
</comment>
<proteinExistence type="inferred from homology"/>
<feature type="chain" id="PRO_0000158394" description="Ribose-5-phosphate isomerase A">
    <location>
        <begin position="1"/>
        <end position="226"/>
    </location>
</feature>
<feature type="active site" description="Proton acceptor" evidence="1">
    <location>
        <position position="108"/>
    </location>
</feature>
<feature type="binding site" evidence="1">
    <location>
        <begin position="33"/>
        <end position="36"/>
    </location>
    <ligand>
        <name>substrate</name>
    </ligand>
</feature>
<feature type="binding site" evidence="1">
    <location>
        <begin position="86"/>
        <end position="89"/>
    </location>
    <ligand>
        <name>substrate</name>
    </ligand>
</feature>
<feature type="binding site" evidence="1">
    <location>
        <begin position="99"/>
        <end position="102"/>
    </location>
    <ligand>
        <name>substrate</name>
    </ligand>
</feature>
<feature type="binding site" evidence="1">
    <location>
        <position position="126"/>
    </location>
    <ligand>
        <name>substrate</name>
    </ligand>
</feature>
<gene>
    <name evidence="1" type="primary">rpiA</name>
    <name type="ordered locus">BP2339</name>
</gene>
<reference key="1">
    <citation type="journal article" date="2003" name="Nat. Genet.">
        <title>Comparative analysis of the genome sequences of Bordetella pertussis, Bordetella parapertussis and Bordetella bronchiseptica.</title>
        <authorList>
            <person name="Parkhill J."/>
            <person name="Sebaihia M."/>
            <person name="Preston A."/>
            <person name="Murphy L.D."/>
            <person name="Thomson N.R."/>
            <person name="Harris D.E."/>
            <person name="Holden M.T.G."/>
            <person name="Churcher C.M."/>
            <person name="Bentley S.D."/>
            <person name="Mungall K.L."/>
            <person name="Cerdeno-Tarraga A.-M."/>
            <person name="Temple L."/>
            <person name="James K.D."/>
            <person name="Harris B."/>
            <person name="Quail M.A."/>
            <person name="Achtman M."/>
            <person name="Atkin R."/>
            <person name="Baker S."/>
            <person name="Basham D."/>
            <person name="Bason N."/>
            <person name="Cherevach I."/>
            <person name="Chillingworth T."/>
            <person name="Collins M."/>
            <person name="Cronin A."/>
            <person name="Davis P."/>
            <person name="Doggett J."/>
            <person name="Feltwell T."/>
            <person name="Goble A."/>
            <person name="Hamlin N."/>
            <person name="Hauser H."/>
            <person name="Holroyd S."/>
            <person name="Jagels K."/>
            <person name="Leather S."/>
            <person name="Moule S."/>
            <person name="Norberczak H."/>
            <person name="O'Neil S."/>
            <person name="Ormond D."/>
            <person name="Price C."/>
            <person name="Rabbinowitsch E."/>
            <person name="Rutter S."/>
            <person name="Sanders M."/>
            <person name="Saunders D."/>
            <person name="Seeger K."/>
            <person name="Sharp S."/>
            <person name="Simmonds M."/>
            <person name="Skelton J."/>
            <person name="Squares R."/>
            <person name="Squares S."/>
            <person name="Stevens K."/>
            <person name="Unwin L."/>
            <person name="Whitehead S."/>
            <person name="Barrell B.G."/>
            <person name="Maskell D.J."/>
        </authorList>
    </citation>
    <scope>NUCLEOTIDE SEQUENCE [LARGE SCALE GENOMIC DNA]</scope>
    <source>
        <strain>Tohama I / ATCC BAA-589 / NCTC 13251</strain>
    </source>
</reference>
<accession>Q7VWC1</accession>